<evidence type="ECO:0000269" key="1">
    <source>
    </source>
</evidence>
<evidence type="ECO:0000303" key="2">
    <source>
    </source>
</evidence>
<evidence type="ECO:0000305" key="3"/>
<evidence type="ECO:0000305" key="4">
    <source>
    </source>
</evidence>
<evidence type="ECO:0000312" key="5">
    <source>
        <dbReference type="EMBL" id="CAM60401.1"/>
    </source>
</evidence>
<proteinExistence type="evidence at protein level"/>
<protein>
    <recommendedName>
        <fullName evidence="4">2-heptyl-3-hydroxy-4(1H)-quinolone synthase</fullName>
        <shortName evidence="4">PQS synthase</shortName>
        <ecNumber evidence="1">1.14.13.182</ecNumber>
    </recommendedName>
    <alternativeName>
        <fullName evidence="4">2-heptyl-4(1H)-quinolone monooxygenase</fullName>
        <shortName evidence="4">HHQ monooxygenase</shortName>
    </alternativeName>
</protein>
<reference key="1">
    <citation type="journal article" date="2009" name="PLoS ONE">
        <title>Non mycobacterial virulence genes in the genome of the emerging pathogen Mycobacterium abscessus.</title>
        <authorList>
            <person name="Ripoll F."/>
            <person name="Pasek S."/>
            <person name="Schenowitz C."/>
            <person name="Dossat C."/>
            <person name="Barbe V."/>
            <person name="Rottman M."/>
            <person name="Macheras E."/>
            <person name="Heym B."/>
            <person name="Herrmann J.L."/>
            <person name="Daffe M."/>
            <person name="Brosch R."/>
            <person name="Risler J.L."/>
            <person name="Gaillard J.L."/>
        </authorList>
    </citation>
    <scope>NUCLEOTIDE SEQUENCE [LARGE SCALE GENOMIC DNA]</scope>
    <source>
        <strain>ATCC 19977 / DSM 44196 / CCUG 20993 / CIP 104536 / JCM 13569 / NCTC 13031 / TMC 1543 / L948</strain>
    </source>
</reference>
<reference key="2">
    <citation type="journal article" date="2017" name="Front. Microbiol.">
        <title>Mycobacterium abscessus subsp. abscessus Is Capable of Degrading Pseudomonas aeruginosa Quinolone Signals.</title>
        <authorList>
            <person name="Birmes F.S."/>
            <person name="Wolf T."/>
            <person name="Kohl T.A."/>
            <person name="Rueger K."/>
            <person name="Bange F."/>
            <person name="Kalinowski J."/>
            <person name="Fetzner S."/>
        </authorList>
    </citation>
    <scope>FUNCTION</scope>
    <scope>CATALYTIC ACTIVITY</scope>
    <scope>INDUCTION</scope>
    <source>
        <strain>ATCC 19977 / DSM 44196 / CCUG 20993 / CIP 104536 / JCM 13569 / NCTC 13031 / TMC 1543 / L948</strain>
    </source>
</reference>
<keyword id="KW-0503">Monooxygenase</keyword>
<keyword id="KW-0520">NAD</keyword>
<keyword id="KW-0560">Oxidoreductase</keyword>
<keyword id="KW-1185">Reference proteome</keyword>
<gene>
    <name evidence="2" type="primary">aqdB</name>
    <name evidence="5" type="ordered locus">MAB_0302</name>
</gene>
<accession>B1MFK1</accession>
<feature type="chain" id="PRO_0000448003" description="2-heptyl-3-hydroxy-4(1H)-quinolone synthase">
    <location>
        <begin position="1"/>
        <end position="375"/>
    </location>
</feature>
<dbReference type="EC" id="1.14.13.182" evidence="1"/>
<dbReference type="EMBL" id="CU458896">
    <property type="protein sequence ID" value="CAM60401.1"/>
    <property type="molecule type" value="Genomic_DNA"/>
</dbReference>
<dbReference type="RefSeq" id="WP_005090569.1">
    <property type="nucleotide sequence ID" value="NZ_MLCG01000005.1"/>
</dbReference>
<dbReference type="SMR" id="B1MFK1"/>
<dbReference type="GeneID" id="93377245"/>
<dbReference type="KEGG" id="mab:MAB_0302"/>
<dbReference type="Proteomes" id="UP000007137">
    <property type="component" value="Chromosome"/>
</dbReference>
<dbReference type="GO" id="GO:0102164">
    <property type="term" value="F:2-heptyl-3-hydroxy-4(1H)-quinolone synthase activity"/>
    <property type="evidence" value="ECO:0007669"/>
    <property type="project" value="UniProtKB-EC"/>
</dbReference>
<dbReference type="GO" id="GO:0071949">
    <property type="term" value="F:FAD binding"/>
    <property type="evidence" value="ECO:0007669"/>
    <property type="project" value="InterPro"/>
</dbReference>
<dbReference type="Gene3D" id="3.30.9.10">
    <property type="entry name" value="D-Amino Acid Oxidase, subunit A, domain 2"/>
    <property type="match status" value="1"/>
</dbReference>
<dbReference type="Gene3D" id="3.50.50.60">
    <property type="entry name" value="FAD/NAD(P)-binding domain"/>
    <property type="match status" value="1"/>
</dbReference>
<dbReference type="InterPro" id="IPR002938">
    <property type="entry name" value="FAD-bd"/>
</dbReference>
<dbReference type="InterPro" id="IPR050493">
    <property type="entry name" value="FAD-dep_Monooxygenase_BioMet"/>
</dbReference>
<dbReference type="InterPro" id="IPR036188">
    <property type="entry name" value="FAD/NAD-bd_sf"/>
</dbReference>
<dbReference type="PANTHER" id="PTHR13789">
    <property type="entry name" value="MONOOXYGENASE"/>
    <property type="match status" value="1"/>
</dbReference>
<dbReference type="PANTHER" id="PTHR13789:SF309">
    <property type="entry name" value="PUTATIVE (AFU_ORTHOLOGUE AFUA_6G14510)-RELATED"/>
    <property type="match status" value="1"/>
</dbReference>
<dbReference type="Pfam" id="PF01494">
    <property type="entry name" value="FAD_binding_3"/>
    <property type="match status" value="1"/>
</dbReference>
<dbReference type="PRINTS" id="PR00420">
    <property type="entry name" value="RNGMNOXGNASE"/>
</dbReference>
<dbReference type="SUPFAM" id="SSF51905">
    <property type="entry name" value="FAD/NAD(P)-binding domain"/>
    <property type="match status" value="1"/>
</dbReference>
<sequence length="375" mass="39751">MSSGHAEVVGGGIGGLTAATALALRGWTVRLHERDTRIRTVGAGIYVWDNGLEALDTIGAAAEGLDDAYEAPAITVRASDGRPLYRIDVNQPGGARCVTLLRDRLIGALHVAAEHAGVEVCTGSAAVSATADGTVEFSTGTSTRADLVVAADGVHSLLRDRLGISYRRIRMRQGAARVMVSGERPFIPGMDVDQHHEFLGGRRRLLYTPCTATQTYLAFVADNDDTATVGPELDLAAWARAFPLLVPVFDAARGRALIRWDNFELIRLSTWSHGRVAVLGDAAHAQPPYVGQGGGTAMNSAVGLAAAVSESADVEDGLNRWEQALRPPIEKAQTTSYRMRLIGSVPEVLRGPLLGALGRSRSSATSQLIKKRSAA</sequence>
<comment type="function">
    <text evidence="1">Involved in the degradation pathway of the Pseudomonas aeruginosa quorum sensing signal molecule HHQ (2-heptyl-4(1H)-quinolone) to anthranilate. Catalyzes the hydroxylation of HHQ to PQS (2-heptyl-3-hydroxy-4(1H)-quinolone).</text>
</comment>
<comment type="catalytic activity">
    <reaction evidence="1">
        <text>2-heptyl-4(1H)-quinolone + NADH + O2 + H(+) = 2-heptyl-3-hydroxy-4(1H)-quinolone + NAD(+) + H2O</text>
        <dbReference type="Rhea" id="RHEA:37871"/>
        <dbReference type="ChEBI" id="CHEBI:15377"/>
        <dbReference type="ChEBI" id="CHEBI:15378"/>
        <dbReference type="ChEBI" id="CHEBI:15379"/>
        <dbReference type="ChEBI" id="CHEBI:29472"/>
        <dbReference type="ChEBI" id="CHEBI:57540"/>
        <dbReference type="ChEBI" id="CHEBI:57945"/>
        <dbReference type="ChEBI" id="CHEBI:62219"/>
        <dbReference type="EC" id="1.14.13.182"/>
    </reaction>
    <physiologicalReaction direction="left-to-right" evidence="1">
        <dbReference type="Rhea" id="RHEA:37872"/>
    </physiologicalReaction>
</comment>
<comment type="induction">
    <text evidence="1">Up-regulated by PQS.</text>
</comment>
<comment type="similarity">
    <text evidence="3">Belongs to the 3-hydroxybenzoate 6-hydroxylase family.</text>
</comment>
<name>AQDB_MYCA9</name>
<organism>
    <name type="scientific">Mycobacteroides abscessus (strain ATCC 19977 / DSM 44196 / CCUG 20993 / CIP 104536 / JCM 13569 / NCTC 13031 / TMC 1543 / L948)</name>
    <name type="common">Mycobacterium abscessus</name>
    <dbReference type="NCBI Taxonomy" id="561007"/>
    <lineage>
        <taxon>Bacteria</taxon>
        <taxon>Bacillati</taxon>
        <taxon>Actinomycetota</taxon>
        <taxon>Actinomycetes</taxon>
        <taxon>Mycobacteriales</taxon>
        <taxon>Mycobacteriaceae</taxon>
        <taxon>Mycobacteroides</taxon>
        <taxon>Mycobacteroides abscessus</taxon>
    </lineage>
</organism>